<feature type="chain" id="PRO_0000444547" description="Fumigaclavine B O-acetyltransferase ifgI">
    <location>
        <begin position="1"/>
        <end position="484"/>
    </location>
</feature>
<sequence>MSTSFDHSVILSPLDHIAPQAYVSYLLSFQTANSTHCLSLLEAGITRLTKVLPLLLGHIVVNPELDGKYNIQSVQIPCTKEDRTILVHKHHPFPMESALGGVQSGMSMLETSDSKQHLCPLPPLIPSTERQPVIRFQANIFTDAIVLAMTFSHIVFDGTGAAKILALLGRCCRDPSVTPLPLIIDEQDRAQSAIFAGLADTSPAQDHTAELGPAPAIHPVPLDAASLRTCRFEFNSERILQLKYQCSQVLKNACMFQPNSASIPVADLPPFLSSNDVLTSALADAIQRVKSQSKTYDCLDLCMAVNMRGRIELSAAREFLGNMACNLRLKTPGPEYTGPEQCLSCRKTHDCPIQTDQLRFLTDLACKVRNKVRNMDRKYFQSCMTYIANQKDWSQTGMIFTDLAFSSWRHLDIYGLDFGDSFGIVHNFDLSFGLIEGDVIFLPKRLTCDQKEAGWDVHITLPAKDLEALVKDDLIRWLMGRDGE</sequence>
<evidence type="ECO:0000250" key="1">
    <source>
        <dbReference type="UniProtKB" id="Q4WZ64"/>
    </source>
</evidence>
<evidence type="ECO:0000269" key="2">
    <source>
    </source>
</evidence>
<evidence type="ECO:0000269" key="3">
    <source>
    </source>
</evidence>
<evidence type="ECO:0000303" key="4">
    <source>
    </source>
</evidence>
<evidence type="ECO:0000305" key="5"/>
<evidence type="ECO:0000305" key="6">
    <source>
    </source>
</evidence>
<keyword id="KW-0012">Acyltransferase</keyword>
<keyword id="KW-0017">Alkaloid metabolism</keyword>
<keyword id="KW-1185">Reference proteome</keyword>
<keyword id="KW-0808">Transferase</keyword>
<comment type="function">
    <text evidence="2 3">Fumigaclavine B O-acetyltransferase; part of the gene cluster that mediates the biosynthesis of isofumigaclavines, fungal ergot alkaloids (PubMed:28620689). The tryptophan dimethylallyltransferase ifgA catalyzes the first step of ergot alkaloid biosynthesis by condensing dimethylallyl diphosphate (DMAP) and tryptophan to form 4-dimethylallyl-L-tryptophan (PubMed:28620689). The second step is catalyzed by the methyltransferase ifgB that methylates 4-dimethylallyl-L-tryptophan in the presence of S-adenosyl-L-methionine, resulting in the formation of N-methyl-dimethylallyl-L-tryptophan (PubMed:28620689). The catalase ifgD and the FAD-dependent oxidoreductase ifgC then transform N-methyl-dimethylallyl-L-tryptophan to chanoclavine-I which is further oxidized by ifgE in the presence of NAD(+), resulting in the formation of chanoclavine-I aldehyde (PubMed:28902217). The chanoclavine-I aldehyde reductases ifgG and/or fgaOx3 reduce chanoclavine-I aldehyde to dihydrochanoclavine-I aldehyde that spontaneously dehydrates to form 6,8-dimethyl-6,7-didehydroergoline (PubMed:28620689, PubMed:28902217). The festuclavine dehydrogenases ifgF1 and/or ifgF2 then catalyze the reduction of 6,8-dimethyl-6,7-didehydroergoline to form festuclavine (PubMed:28620689). Hydrolysis of festuclavine by a yet undetermined cytochrome P450 monooxygenase (called ifgH) then leads to the formation of isofumigaclavine B which is in turn acetylated by ifgI to isofumigaclavine A (PubMed:28620689). Penicillium roqueforti has interestingly at least two sets of genes for the consumption of chanoclavine-I aldehyde on three different loci, the OYEs ifgG/fgaOx3 and the festuclavine synthase homologs ifgF1/ifgF2 (PubMed:28620689, PubMed:28902217). The reason for the duplication of these genes is unclear, probably to ensure the conversion of chanoclavine-I aldehyde by differential gene expression under various environmental conditions (PubMed:28902217).</text>
</comment>
<comment type="catalytic activity">
    <reaction evidence="1">
        <text>fumigaclavine B + acetyl-CoA = fumigaclavine A + CoA</text>
        <dbReference type="Rhea" id="RHEA:34267"/>
        <dbReference type="ChEBI" id="CHEBI:57287"/>
        <dbReference type="ChEBI" id="CHEBI:57288"/>
        <dbReference type="ChEBI" id="CHEBI:67145"/>
        <dbReference type="ChEBI" id="CHEBI:67146"/>
        <dbReference type="EC" id="2.3.1.205"/>
    </reaction>
</comment>
<comment type="pathway">
    <text evidence="6">Alkaloid biosynthesis; ergot alkaloid biosynthesis.</text>
</comment>
<comment type="subunit">
    <text evidence="1">Monomer.</text>
</comment>
<comment type="similarity">
    <text evidence="5">Belongs to the fumigaclavine B O-acetyltransferase family.</text>
</comment>
<organism>
    <name type="scientific">Penicillium roqueforti (strain FM164)</name>
    <dbReference type="NCBI Taxonomy" id="1365484"/>
    <lineage>
        <taxon>Eukaryota</taxon>
        <taxon>Fungi</taxon>
        <taxon>Dikarya</taxon>
        <taxon>Ascomycota</taxon>
        <taxon>Pezizomycotina</taxon>
        <taxon>Eurotiomycetes</taxon>
        <taxon>Eurotiomycetidae</taxon>
        <taxon>Eurotiales</taxon>
        <taxon>Aspergillaceae</taxon>
        <taxon>Penicillium</taxon>
    </lineage>
</organism>
<dbReference type="EC" id="2.3.1.205" evidence="1"/>
<dbReference type="EMBL" id="HG792016">
    <property type="protein sequence ID" value="CDM30153.1"/>
    <property type="molecule type" value="Genomic_DNA"/>
</dbReference>
<dbReference type="SMR" id="W6Q0S4"/>
<dbReference type="STRING" id="1365484.W6Q0S4"/>
<dbReference type="OMA" id="ILPRMYF"/>
<dbReference type="OrthoDB" id="1862401at2759"/>
<dbReference type="UniPathway" id="UPA00327"/>
<dbReference type="Proteomes" id="UP000030686">
    <property type="component" value="Unassembled WGS sequence"/>
</dbReference>
<dbReference type="GO" id="GO:0016747">
    <property type="term" value="F:acyltransferase activity, transferring groups other than amino-acyl groups"/>
    <property type="evidence" value="ECO:0007669"/>
    <property type="project" value="TreeGrafter"/>
</dbReference>
<dbReference type="GO" id="GO:0035835">
    <property type="term" value="P:indole alkaloid biosynthetic process"/>
    <property type="evidence" value="ECO:0007669"/>
    <property type="project" value="UniProtKB-UniPathway"/>
</dbReference>
<dbReference type="Gene3D" id="3.30.559.10">
    <property type="entry name" value="Chloramphenicol acetyltransferase-like domain"/>
    <property type="match status" value="2"/>
</dbReference>
<dbReference type="InterPro" id="IPR023213">
    <property type="entry name" value="CAT-like_dom_sf"/>
</dbReference>
<dbReference type="InterPro" id="IPR050317">
    <property type="entry name" value="Plant_Fungal_Acyltransferase"/>
</dbReference>
<dbReference type="InterPro" id="IPR054710">
    <property type="entry name" value="Tri101-like_N"/>
</dbReference>
<dbReference type="PANTHER" id="PTHR31642:SF270">
    <property type="entry name" value="O-ACYLTRANSFERASE AUSQ"/>
    <property type="match status" value="1"/>
</dbReference>
<dbReference type="PANTHER" id="PTHR31642">
    <property type="entry name" value="TRICHOTHECENE 3-O-ACETYLTRANSFERASE"/>
    <property type="match status" value="1"/>
</dbReference>
<dbReference type="Pfam" id="PF22664">
    <property type="entry name" value="TRI-like_N"/>
    <property type="match status" value="1"/>
</dbReference>
<protein>
    <recommendedName>
        <fullName evidence="4">Fumigaclavine B O-acetyltransferase ifgI</fullName>
        <ecNumber evidence="1">2.3.1.205</ecNumber>
    </recommendedName>
    <alternativeName>
        <fullName evidence="4">Isofumigaclavine biosynthesis cluster B protein I</fullName>
    </alternativeName>
</protein>
<proteinExistence type="inferred from homology"/>
<accession>W6Q0S4</accession>
<reference key="1">
    <citation type="journal article" date="2014" name="Nat. Commun.">
        <title>Multiple recent horizontal transfers of a large genomic region in cheese making fungi.</title>
        <authorList>
            <person name="Cheeseman K."/>
            <person name="Ropars J."/>
            <person name="Renault P."/>
            <person name="Dupont J."/>
            <person name="Gouzy J."/>
            <person name="Branca A."/>
            <person name="Abraham A.-L."/>
            <person name="Ceppi M."/>
            <person name="Conseiller E."/>
            <person name="Debuchy R."/>
            <person name="Malagnac F."/>
            <person name="Goarin A."/>
            <person name="Silar P."/>
            <person name="Lacoste S."/>
            <person name="Sallet E."/>
            <person name="Bensimon A."/>
            <person name="Giraud T."/>
            <person name="Brygoo Y."/>
        </authorList>
    </citation>
    <scope>NUCLEOTIDE SEQUENCE [LARGE SCALE GENOMIC DNA]</scope>
    <source>
        <strain>FM164</strain>
    </source>
</reference>
<reference key="2">
    <citation type="journal article" date="2017" name="Appl. Microbiol. Biotechnol.">
        <title>Silencing of a second dimethylallyltryptophan synthase of Penicillium roqueforti reveals a novel clavine alkaloid gene cluster.</title>
        <authorList>
            <person name="Fernandez-Bodega A."/>
            <person name="Alvarez-Alvarez R."/>
            <person name="Liras P."/>
            <person name="Martin J.F."/>
        </authorList>
    </citation>
    <scope>FUNCTION</scope>
    <scope>PATHWAY</scope>
</reference>
<reference key="3">
    <citation type="journal article" date="2017" name="Org. Biomol. Chem.">
        <title>A bifunctional old yellow enzyme from Penicillium roqueforti is involved in ergot alkaloid biosynthesis.</title>
        <authorList>
            <person name="Gerhards N."/>
            <person name="Li S.M."/>
        </authorList>
    </citation>
    <scope>FUNCTION</scope>
</reference>
<gene>
    <name evidence="4" type="primary">ifgI</name>
    <name type="ORF">PROQFM164_S02g000302</name>
</gene>
<name>IFGH_PENRF</name>